<protein>
    <recommendedName>
        <fullName evidence="1">Enolase-phosphatase E1</fullName>
        <ecNumber evidence="1">3.1.3.77</ecNumber>
    </recommendedName>
    <alternativeName>
        <fullName evidence="1">2,3-diketo-5-methylthio-1-phosphopentane phosphatase</fullName>
    </alternativeName>
</protein>
<accession>A8HAA3</accession>
<reference key="1">
    <citation type="submission" date="2007-10" db="EMBL/GenBank/DDBJ databases">
        <title>Complete sequence of Shewanella pealeana ATCC 700345.</title>
        <authorList>
            <consortium name="US DOE Joint Genome Institute"/>
            <person name="Copeland A."/>
            <person name="Lucas S."/>
            <person name="Lapidus A."/>
            <person name="Barry K."/>
            <person name="Glavina del Rio T."/>
            <person name="Dalin E."/>
            <person name="Tice H."/>
            <person name="Pitluck S."/>
            <person name="Chertkov O."/>
            <person name="Brettin T."/>
            <person name="Bruce D."/>
            <person name="Detter J.C."/>
            <person name="Han C."/>
            <person name="Schmutz J."/>
            <person name="Larimer F."/>
            <person name="Land M."/>
            <person name="Hauser L."/>
            <person name="Kyrpides N."/>
            <person name="Kim E."/>
            <person name="Zhao J.-S.Z."/>
            <person name="Manno D."/>
            <person name="Hawari J."/>
            <person name="Richardson P."/>
        </authorList>
    </citation>
    <scope>NUCLEOTIDE SEQUENCE [LARGE SCALE GENOMIC DNA]</scope>
    <source>
        <strain>ATCC 700345 / ANG-SQ1</strain>
    </source>
</reference>
<keyword id="KW-0028">Amino-acid biosynthesis</keyword>
<keyword id="KW-0378">Hydrolase</keyword>
<keyword id="KW-0460">Magnesium</keyword>
<keyword id="KW-0479">Metal-binding</keyword>
<keyword id="KW-0486">Methionine biosynthesis</keyword>
<keyword id="KW-1185">Reference proteome</keyword>
<evidence type="ECO:0000255" key="1">
    <source>
        <dbReference type="HAMAP-Rule" id="MF_01681"/>
    </source>
</evidence>
<dbReference type="EC" id="3.1.3.77" evidence="1"/>
<dbReference type="EMBL" id="CP000851">
    <property type="protein sequence ID" value="ABV89490.1"/>
    <property type="molecule type" value="Genomic_DNA"/>
</dbReference>
<dbReference type="RefSeq" id="WP_012157368.1">
    <property type="nucleotide sequence ID" value="NC_009901.1"/>
</dbReference>
<dbReference type="SMR" id="A8HAA3"/>
<dbReference type="STRING" id="398579.Spea_4180"/>
<dbReference type="KEGG" id="spl:Spea_4180"/>
<dbReference type="eggNOG" id="COG4229">
    <property type="taxonomic scope" value="Bacteria"/>
</dbReference>
<dbReference type="HOGENOM" id="CLU_023273_0_0_6"/>
<dbReference type="OrthoDB" id="9797416at2"/>
<dbReference type="UniPathway" id="UPA00904">
    <property type="reaction ID" value="UER00876"/>
</dbReference>
<dbReference type="UniPathway" id="UPA00904">
    <property type="reaction ID" value="UER00877"/>
</dbReference>
<dbReference type="Proteomes" id="UP000002608">
    <property type="component" value="Chromosome"/>
</dbReference>
<dbReference type="GO" id="GO:0043715">
    <property type="term" value="F:2,3-diketo-5-methylthiopentyl-1-phosphate enolase activity"/>
    <property type="evidence" value="ECO:0007669"/>
    <property type="project" value="UniProtKB-UniRule"/>
</dbReference>
<dbReference type="GO" id="GO:0043716">
    <property type="term" value="F:2-hydroxy-3-keto-5-methylthiopentenyl-1-phosphate phosphatase activity"/>
    <property type="evidence" value="ECO:0007669"/>
    <property type="project" value="UniProtKB-UniRule"/>
</dbReference>
<dbReference type="GO" id="GO:0043874">
    <property type="term" value="F:acireductone synthase activity"/>
    <property type="evidence" value="ECO:0007669"/>
    <property type="project" value="UniProtKB-EC"/>
</dbReference>
<dbReference type="GO" id="GO:0000287">
    <property type="term" value="F:magnesium ion binding"/>
    <property type="evidence" value="ECO:0007669"/>
    <property type="project" value="UniProtKB-UniRule"/>
</dbReference>
<dbReference type="GO" id="GO:0019509">
    <property type="term" value="P:L-methionine salvage from methylthioadenosine"/>
    <property type="evidence" value="ECO:0007669"/>
    <property type="project" value="UniProtKB-UniRule"/>
</dbReference>
<dbReference type="CDD" id="cd01629">
    <property type="entry name" value="HAD_EP"/>
    <property type="match status" value="1"/>
</dbReference>
<dbReference type="FunFam" id="1.10.720.60:FF:000008">
    <property type="entry name" value="Enolase-phosphatase E1"/>
    <property type="match status" value="1"/>
</dbReference>
<dbReference type="Gene3D" id="1.10.720.60">
    <property type="match status" value="1"/>
</dbReference>
<dbReference type="Gene3D" id="3.40.50.1000">
    <property type="entry name" value="HAD superfamily/HAD-like"/>
    <property type="match status" value="1"/>
</dbReference>
<dbReference type="HAMAP" id="MF_01681">
    <property type="entry name" value="Salvage_MtnC"/>
    <property type="match status" value="1"/>
</dbReference>
<dbReference type="InterPro" id="IPR023943">
    <property type="entry name" value="Enolase-ppase_E1"/>
</dbReference>
<dbReference type="InterPro" id="IPR036412">
    <property type="entry name" value="HAD-like_sf"/>
</dbReference>
<dbReference type="InterPro" id="IPR006439">
    <property type="entry name" value="HAD-SF_hydro_IA"/>
</dbReference>
<dbReference type="InterPro" id="IPR023214">
    <property type="entry name" value="HAD_sf"/>
</dbReference>
<dbReference type="NCBIfam" id="TIGR01691">
    <property type="entry name" value="enolase-ppase"/>
    <property type="match status" value="1"/>
</dbReference>
<dbReference type="NCBIfam" id="TIGR01549">
    <property type="entry name" value="HAD-SF-IA-v1"/>
    <property type="match status" value="1"/>
</dbReference>
<dbReference type="PANTHER" id="PTHR20371">
    <property type="entry name" value="ENOLASE-PHOSPHATASE E1"/>
    <property type="match status" value="1"/>
</dbReference>
<dbReference type="PANTHER" id="PTHR20371:SF1">
    <property type="entry name" value="ENOLASE-PHOSPHATASE E1"/>
    <property type="match status" value="1"/>
</dbReference>
<dbReference type="Pfam" id="PF00702">
    <property type="entry name" value="Hydrolase"/>
    <property type="match status" value="1"/>
</dbReference>
<dbReference type="PRINTS" id="PR00413">
    <property type="entry name" value="HADHALOGNASE"/>
</dbReference>
<dbReference type="SFLD" id="SFLDG01133">
    <property type="entry name" value="C1.5.4:_Enolase-phosphatase_Li"/>
    <property type="match status" value="1"/>
</dbReference>
<dbReference type="SFLD" id="SFLDF00044">
    <property type="entry name" value="enolase-phosphatase"/>
    <property type="match status" value="1"/>
</dbReference>
<dbReference type="SUPFAM" id="SSF56784">
    <property type="entry name" value="HAD-like"/>
    <property type="match status" value="1"/>
</dbReference>
<proteinExistence type="inferred from homology"/>
<comment type="function">
    <text evidence="1">Bifunctional enzyme that catalyzes the enolization of 2,3-diketo-5-methylthiopentyl-1-phosphate (DK-MTP-1-P) into the intermediate 2-hydroxy-3-keto-5-methylthiopentenyl-1-phosphate (HK-MTPenyl-1-P), which is then dephosphorylated to form the acireductone 1,2-dihydroxy-3-keto-5-methylthiopentene (DHK-MTPene).</text>
</comment>
<comment type="catalytic activity">
    <reaction evidence="1">
        <text>5-methylsulfanyl-2,3-dioxopentyl phosphate + H2O = 1,2-dihydroxy-5-(methylsulfanyl)pent-1-en-3-one + phosphate</text>
        <dbReference type="Rhea" id="RHEA:21700"/>
        <dbReference type="ChEBI" id="CHEBI:15377"/>
        <dbReference type="ChEBI" id="CHEBI:43474"/>
        <dbReference type="ChEBI" id="CHEBI:49252"/>
        <dbReference type="ChEBI" id="CHEBI:58828"/>
        <dbReference type="EC" id="3.1.3.77"/>
    </reaction>
</comment>
<comment type="cofactor">
    <cofactor evidence="1">
        <name>Mg(2+)</name>
        <dbReference type="ChEBI" id="CHEBI:18420"/>
    </cofactor>
    <text evidence="1">Binds 1 Mg(2+) ion per subunit.</text>
</comment>
<comment type="pathway">
    <text evidence="1">Amino-acid biosynthesis; L-methionine biosynthesis via salvage pathway; L-methionine from S-methyl-5-thio-alpha-D-ribose 1-phosphate: step 3/6.</text>
</comment>
<comment type="pathway">
    <text evidence="1">Amino-acid biosynthesis; L-methionine biosynthesis via salvage pathway; L-methionine from S-methyl-5-thio-alpha-D-ribose 1-phosphate: step 4/6.</text>
</comment>
<comment type="subunit">
    <text evidence="1">Monomer.</text>
</comment>
<comment type="similarity">
    <text evidence="1">Belongs to the HAD-like hydrolase superfamily. MasA/MtnC family.</text>
</comment>
<feature type="chain" id="PRO_0000357405" description="Enolase-phosphatase E1">
    <location>
        <begin position="1"/>
        <end position="226"/>
    </location>
</feature>
<name>MTNC_SHEPA</name>
<gene>
    <name evidence="1" type="primary">mtnC</name>
    <name type="ordered locus">Spea_4180</name>
</gene>
<sequence>MGIRAIVVDTAGTTTDLNFIEDVLFPYSAKALPAFLEENQNNVLVDNCICDVQDIALEPDASLARVTEILLQWIEEDRKATPLKTIQGLIWKQGYANGEFTGHIFPDFIEALDGYKQQGLRVYSFSSGSVEAQKLLFSHSDAGDLNDKFNGHFDTRTGNKRFKQAYSNIVNTISLSPKQILFVSDVLEELKAANEAGLHVVQMVRDDSQRTGDFKTIASFDELKID</sequence>
<organism>
    <name type="scientific">Shewanella pealeana (strain ATCC 700345 / ANG-SQ1)</name>
    <dbReference type="NCBI Taxonomy" id="398579"/>
    <lineage>
        <taxon>Bacteria</taxon>
        <taxon>Pseudomonadati</taxon>
        <taxon>Pseudomonadota</taxon>
        <taxon>Gammaproteobacteria</taxon>
        <taxon>Alteromonadales</taxon>
        <taxon>Shewanellaceae</taxon>
        <taxon>Shewanella</taxon>
    </lineage>
</organism>